<comment type="function">
    <text evidence="1">May play a key role in the regulation of the intracellular concentration of adenosylhomocysteine.</text>
</comment>
<comment type="catalytic activity">
    <reaction evidence="1">
        <text>S-adenosyl-L-homocysteine + H2O = L-homocysteine + adenosine</text>
        <dbReference type="Rhea" id="RHEA:21708"/>
        <dbReference type="ChEBI" id="CHEBI:15377"/>
        <dbReference type="ChEBI" id="CHEBI:16335"/>
        <dbReference type="ChEBI" id="CHEBI:57856"/>
        <dbReference type="ChEBI" id="CHEBI:58199"/>
        <dbReference type="EC" id="3.13.2.1"/>
    </reaction>
</comment>
<comment type="cofactor">
    <cofactor evidence="1">
        <name>NAD(+)</name>
        <dbReference type="ChEBI" id="CHEBI:57540"/>
    </cofactor>
    <text evidence="1">Binds 1 NAD(+) per subunit.</text>
</comment>
<comment type="pathway">
    <text evidence="1">Amino-acid biosynthesis; L-homocysteine biosynthesis; L-homocysteine from S-adenosyl-L-homocysteine: step 1/1.</text>
</comment>
<comment type="subcellular location">
    <subcellularLocation>
        <location evidence="1">Cytoplasm</location>
    </subcellularLocation>
</comment>
<comment type="similarity">
    <text evidence="1">Belongs to the adenosylhomocysteinase family.</text>
</comment>
<feature type="chain" id="PRO_1000129291" description="Adenosylhomocysteinase">
    <location>
        <begin position="1"/>
        <end position="471"/>
    </location>
</feature>
<feature type="binding site" evidence="1">
    <location>
        <position position="60"/>
    </location>
    <ligand>
        <name>substrate</name>
    </ligand>
</feature>
<feature type="binding site" evidence="1">
    <location>
        <position position="135"/>
    </location>
    <ligand>
        <name>substrate</name>
    </ligand>
</feature>
<feature type="binding site" evidence="1">
    <location>
        <position position="196"/>
    </location>
    <ligand>
        <name>substrate</name>
    </ligand>
</feature>
<feature type="binding site" evidence="1">
    <location>
        <begin position="197"/>
        <end position="199"/>
    </location>
    <ligand>
        <name>NAD(+)</name>
        <dbReference type="ChEBI" id="CHEBI:57540"/>
    </ligand>
</feature>
<feature type="binding site" evidence="1">
    <location>
        <position position="226"/>
    </location>
    <ligand>
        <name>substrate</name>
    </ligand>
</feature>
<feature type="binding site" evidence="1">
    <location>
        <position position="230"/>
    </location>
    <ligand>
        <name>substrate</name>
    </ligand>
</feature>
<feature type="binding site" evidence="1">
    <location>
        <position position="231"/>
    </location>
    <ligand>
        <name>NAD(+)</name>
        <dbReference type="ChEBI" id="CHEBI:57540"/>
    </ligand>
</feature>
<feature type="binding site" evidence="1">
    <location>
        <begin position="260"/>
        <end position="265"/>
    </location>
    <ligand>
        <name>NAD(+)</name>
        <dbReference type="ChEBI" id="CHEBI:57540"/>
    </ligand>
</feature>
<feature type="binding site" evidence="1">
    <location>
        <position position="283"/>
    </location>
    <ligand>
        <name>NAD(+)</name>
        <dbReference type="ChEBI" id="CHEBI:57540"/>
    </ligand>
</feature>
<feature type="binding site" evidence="1">
    <location>
        <position position="318"/>
    </location>
    <ligand>
        <name>NAD(+)</name>
        <dbReference type="ChEBI" id="CHEBI:57540"/>
    </ligand>
</feature>
<feature type="binding site" evidence="1">
    <location>
        <begin position="339"/>
        <end position="341"/>
    </location>
    <ligand>
        <name>NAD(+)</name>
        <dbReference type="ChEBI" id="CHEBI:57540"/>
    </ligand>
</feature>
<feature type="binding site" evidence="1">
    <location>
        <position position="387"/>
    </location>
    <ligand>
        <name>NAD(+)</name>
        <dbReference type="ChEBI" id="CHEBI:57540"/>
    </ligand>
</feature>
<accession>B4SD43</accession>
<organism>
    <name type="scientific">Pelodictyon phaeoclathratiforme (strain DSM 5477 / BU-1)</name>
    <dbReference type="NCBI Taxonomy" id="324925"/>
    <lineage>
        <taxon>Bacteria</taxon>
        <taxon>Pseudomonadati</taxon>
        <taxon>Chlorobiota</taxon>
        <taxon>Chlorobiia</taxon>
        <taxon>Chlorobiales</taxon>
        <taxon>Chlorobiaceae</taxon>
        <taxon>Chlorobium/Pelodictyon group</taxon>
        <taxon>Pelodictyon</taxon>
    </lineage>
</organism>
<evidence type="ECO:0000255" key="1">
    <source>
        <dbReference type="HAMAP-Rule" id="MF_00563"/>
    </source>
</evidence>
<reference key="1">
    <citation type="submission" date="2008-06" db="EMBL/GenBank/DDBJ databases">
        <title>Complete sequence of Pelodictyon phaeoclathratiforme BU-1.</title>
        <authorList>
            <consortium name="US DOE Joint Genome Institute"/>
            <person name="Lucas S."/>
            <person name="Copeland A."/>
            <person name="Lapidus A."/>
            <person name="Glavina del Rio T."/>
            <person name="Dalin E."/>
            <person name="Tice H."/>
            <person name="Bruce D."/>
            <person name="Goodwin L."/>
            <person name="Pitluck S."/>
            <person name="Schmutz J."/>
            <person name="Larimer F."/>
            <person name="Land M."/>
            <person name="Hauser L."/>
            <person name="Kyrpides N."/>
            <person name="Mikhailova N."/>
            <person name="Liu Z."/>
            <person name="Li T."/>
            <person name="Zhao F."/>
            <person name="Overmann J."/>
            <person name="Bryant D.A."/>
            <person name="Richardson P."/>
        </authorList>
    </citation>
    <scope>NUCLEOTIDE SEQUENCE [LARGE SCALE GENOMIC DNA]</scope>
    <source>
        <strain>DSM 5477 / BU-1</strain>
    </source>
</reference>
<proteinExistence type="inferred from homology"/>
<gene>
    <name evidence="1" type="primary">ahcY</name>
    <name type="ordered locus">Ppha_2095</name>
</gene>
<sequence>MTTLTEVLDYKVADLSLAEWGRKEIDVAEKEMPGLMATRRKYAGQYPLKGARIAGSLHMTIQTAVLIETLVELGAEVRWASCNIFSTQDHAAAAIAKSGVPVFAWKGETLEEYWWCTRQILEFEGGKGPNLIVDDGGDATLMIILGYKIENNPELLEKAPANLEEKALYQQFREVFAEDSQRWHKVAAEMKGVSEETTTGVHRLYQMMEKGELLFPAINVNDSVTKSKFDNLYGCRESLADGIKRATDVMVAGKVVVVLGYGDVGKGSARSMRAYGARVIVTEIDPICALQAAMEGYEVSTMDEAVKEGNIFVTTTGNKDVITLEHMKQMKDEAIVCNIGHFDNEIQVEQLYAYAGATRLNIKPQVDKYTFENGNCIYLLAEGRLVNLGCATGHPSFVMSNSFTNQTLAQIELWTKDYAVGVYRLPKELDEEVARLHLEQLGVKLTRLSDEQAAYIGVPLDGPYKPEHYRY</sequence>
<keyword id="KW-0963">Cytoplasm</keyword>
<keyword id="KW-0378">Hydrolase</keyword>
<keyword id="KW-0520">NAD</keyword>
<keyword id="KW-0554">One-carbon metabolism</keyword>
<keyword id="KW-1185">Reference proteome</keyword>
<dbReference type="EC" id="3.13.2.1" evidence="1"/>
<dbReference type="EMBL" id="CP001110">
    <property type="protein sequence ID" value="ACF44302.1"/>
    <property type="molecule type" value="Genomic_DNA"/>
</dbReference>
<dbReference type="RefSeq" id="WP_012508781.1">
    <property type="nucleotide sequence ID" value="NC_011060.1"/>
</dbReference>
<dbReference type="SMR" id="B4SD43"/>
<dbReference type="STRING" id="324925.Ppha_2095"/>
<dbReference type="KEGG" id="pph:Ppha_2095"/>
<dbReference type="eggNOG" id="COG0499">
    <property type="taxonomic scope" value="Bacteria"/>
</dbReference>
<dbReference type="HOGENOM" id="CLU_025194_2_1_10"/>
<dbReference type="OrthoDB" id="9802717at2"/>
<dbReference type="UniPathway" id="UPA00314">
    <property type="reaction ID" value="UER00076"/>
</dbReference>
<dbReference type="Proteomes" id="UP000002724">
    <property type="component" value="Chromosome"/>
</dbReference>
<dbReference type="GO" id="GO:0005829">
    <property type="term" value="C:cytosol"/>
    <property type="evidence" value="ECO:0007669"/>
    <property type="project" value="TreeGrafter"/>
</dbReference>
<dbReference type="GO" id="GO:0004013">
    <property type="term" value="F:adenosylhomocysteinase activity"/>
    <property type="evidence" value="ECO:0007669"/>
    <property type="project" value="UniProtKB-UniRule"/>
</dbReference>
<dbReference type="GO" id="GO:0071269">
    <property type="term" value="P:L-homocysteine biosynthetic process"/>
    <property type="evidence" value="ECO:0007669"/>
    <property type="project" value="UniProtKB-UniRule"/>
</dbReference>
<dbReference type="GO" id="GO:0006730">
    <property type="term" value="P:one-carbon metabolic process"/>
    <property type="evidence" value="ECO:0007669"/>
    <property type="project" value="UniProtKB-KW"/>
</dbReference>
<dbReference type="GO" id="GO:0033353">
    <property type="term" value="P:S-adenosylmethionine cycle"/>
    <property type="evidence" value="ECO:0007669"/>
    <property type="project" value="TreeGrafter"/>
</dbReference>
<dbReference type="CDD" id="cd00401">
    <property type="entry name" value="SAHH"/>
    <property type="match status" value="1"/>
</dbReference>
<dbReference type="FunFam" id="3.40.50.720:FF:000004">
    <property type="entry name" value="Adenosylhomocysteinase"/>
    <property type="match status" value="1"/>
</dbReference>
<dbReference type="Gene3D" id="3.40.50.1480">
    <property type="entry name" value="Adenosylhomocysteinase-like"/>
    <property type="match status" value="1"/>
</dbReference>
<dbReference type="Gene3D" id="3.40.50.720">
    <property type="entry name" value="NAD(P)-binding Rossmann-like Domain"/>
    <property type="match status" value="1"/>
</dbReference>
<dbReference type="HAMAP" id="MF_00563">
    <property type="entry name" value="AdoHcyase"/>
    <property type="match status" value="1"/>
</dbReference>
<dbReference type="InterPro" id="IPR042172">
    <property type="entry name" value="Adenosylhomocyst_ase-like_sf"/>
</dbReference>
<dbReference type="InterPro" id="IPR000043">
    <property type="entry name" value="Adenosylhomocysteinase-like"/>
</dbReference>
<dbReference type="InterPro" id="IPR015878">
    <property type="entry name" value="Ado_hCys_hydrolase_NAD-bd"/>
</dbReference>
<dbReference type="InterPro" id="IPR036291">
    <property type="entry name" value="NAD(P)-bd_dom_sf"/>
</dbReference>
<dbReference type="InterPro" id="IPR020082">
    <property type="entry name" value="S-Ado-L-homoCys_hydrolase_CS"/>
</dbReference>
<dbReference type="NCBIfam" id="TIGR00936">
    <property type="entry name" value="ahcY"/>
    <property type="match status" value="1"/>
</dbReference>
<dbReference type="NCBIfam" id="NF004005">
    <property type="entry name" value="PRK05476.2-3"/>
    <property type="match status" value="1"/>
</dbReference>
<dbReference type="PANTHER" id="PTHR23420">
    <property type="entry name" value="ADENOSYLHOMOCYSTEINASE"/>
    <property type="match status" value="1"/>
</dbReference>
<dbReference type="PANTHER" id="PTHR23420:SF0">
    <property type="entry name" value="ADENOSYLHOMOCYSTEINASE"/>
    <property type="match status" value="1"/>
</dbReference>
<dbReference type="Pfam" id="PF05221">
    <property type="entry name" value="AdoHcyase"/>
    <property type="match status" value="1"/>
</dbReference>
<dbReference type="Pfam" id="PF00670">
    <property type="entry name" value="AdoHcyase_NAD"/>
    <property type="match status" value="1"/>
</dbReference>
<dbReference type="PIRSF" id="PIRSF001109">
    <property type="entry name" value="Ad_hcy_hydrolase"/>
    <property type="match status" value="1"/>
</dbReference>
<dbReference type="SMART" id="SM00996">
    <property type="entry name" value="AdoHcyase"/>
    <property type="match status" value="1"/>
</dbReference>
<dbReference type="SMART" id="SM00997">
    <property type="entry name" value="AdoHcyase_NAD"/>
    <property type="match status" value="1"/>
</dbReference>
<dbReference type="SUPFAM" id="SSF52283">
    <property type="entry name" value="Formate/glycerate dehydrogenase catalytic domain-like"/>
    <property type="match status" value="1"/>
</dbReference>
<dbReference type="SUPFAM" id="SSF51735">
    <property type="entry name" value="NAD(P)-binding Rossmann-fold domains"/>
    <property type="match status" value="1"/>
</dbReference>
<dbReference type="PROSITE" id="PS00738">
    <property type="entry name" value="ADOHCYASE_1"/>
    <property type="match status" value="1"/>
</dbReference>
<dbReference type="PROSITE" id="PS00739">
    <property type="entry name" value="ADOHCYASE_2"/>
    <property type="match status" value="1"/>
</dbReference>
<name>SAHH_PELPB</name>
<protein>
    <recommendedName>
        <fullName evidence="1">Adenosylhomocysteinase</fullName>
        <ecNumber evidence="1">3.13.2.1</ecNumber>
    </recommendedName>
    <alternativeName>
        <fullName evidence="1">S-adenosyl-L-homocysteine hydrolase</fullName>
        <shortName evidence="1">AdoHcyase</shortName>
    </alternativeName>
</protein>